<protein>
    <recommendedName>
        <fullName evidence="1">Endoribonuclease YbeY</fullName>
        <ecNumber evidence="1">3.1.-.-</ecNumber>
    </recommendedName>
</protein>
<dbReference type="EC" id="3.1.-.-" evidence="1"/>
<dbReference type="EMBL" id="BA000017">
    <property type="protein sequence ID" value="BAB57732.1"/>
    <property type="molecule type" value="Genomic_DNA"/>
</dbReference>
<dbReference type="RefSeq" id="WP_000494134.1">
    <property type="nucleotide sequence ID" value="NC_002758.2"/>
</dbReference>
<dbReference type="PDB" id="7Y7O">
    <property type="method" value="X-ray"/>
    <property type="resolution" value="1.90 A"/>
    <property type="chains" value="A=2-155"/>
</dbReference>
<dbReference type="PDBsum" id="7Y7O"/>
<dbReference type="SMR" id="P67136"/>
<dbReference type="KEGG" id="sav:SAV1570"/>
<dbReference type="HOGENOM" id="CLU_106710_3_0_9"/>
<dbReference type="PhylomeDB" id="P67136"/>
<dbReference type="Proteomes" id="UP000002481">
    <property type="component" value="Chromosome"/>
</dbReference>
<dbReference type="GO" id="GO:0005737">
    <property type="term" value="C:cytoplasm"/>
    <property type="evidence" value="ECO:0007669"/>
    <property type="project" value="UniProtKB-SubCell"/>
</dbReference>
<dbReference type="GO" id="GO:0004222">
    <property type="term" value="F:metalloendopeptidase activity"/>
    <property type="evidence" value="ECO:0007669"/>
    <property type="project" value="InterPro"/>
</dbReference>
<dbReference type="GO" id="GO:0004521">
    <property type="term" value="F:RNA endonuclease activity"/>
    <property type="evidence" value="ECO:0007669"/>
    <property type="project" value="UniProtKB-UniRule"/>
</dbReference>
<dbReference type="GO" id="GO:0008270">
    <property type="term" value="F:zinc ion binding"/>
    <property type="evidence" value="ECO:0007669"/>
    <property type="project" value="UniProtKB-UniRule"/>
</dbReference>
<dbReference type="GO" id="GO:0006364">
    <property type="term" value="P:rRNA processing"/>
    <property type="evidence" value="ECO:0007669"/>
    <property type="project" value="UniProtKB-UniRule"/>
</dbReference>
<dbReference type="Gene3D" id="3.40.390.30">
    <property type="entry name" value="Metalloproteases ('zincins'), catalytic domain"/>
    <property type="match status" value="1"/>
</dbReference>
<dbReference type="HAMAP" id="MF_00009">
    <property type="entry name" value="Endoribonucl_YbeY"/>
    <property type="match status" value="1"/>
</dbReference>
<dbReference type="InterPro" id="IPR023091">
    <property type="entry name" value="MetalPrtase_cat_dom_sf_prd"/>
</dbReference>
<dbReference type="InterPro" id="IPR002036">
    <property type="entry name" value="YbeY"/>
</dbReference>
<dbReference type="InterPro" id="IPR020549">
    <property type="entry name" value="YbeY_CS"/>
</dbReference>
<dbReference type="NCBIfam" id="TIGR00043">
    <property type="entry name" value="rRNA maturation RNase YbeY"/>
    <property type="match status" value="1"/>
</dbReference>
<dbReference type="PANTHER" id="PTHR46986">
    <property type="entry name" value="ENDORIBONUCLEASE YBEY, CHLOROPLASTIC"/>
    <property type="match status" value="1"/>
</dbReference>
<dbReference type="PANTHER" id="PTHR46986:SF1">
    <property type="entry name" value="ENDORIBONUCLEASE YBEY, CHLOROPLASTIC"/>
    <property type="match status" value="1"/>
</dbReference>
<dbReference type="Pfam" id="PF02130">
    <property type="entry name" value="YbeY"/>
    <property type="match status" value="1"/>
</dbReference>
<dbReference type="SUPFAM" id="SSF55486">
    <property type="entry name" value="Metalloproteases ('zincins'), catalytic domain"/>
    <property type="match status" value="1"/>
</dbReference>
<dbReference type="PROSITE" id="PS01306">
    <property type="entry name" value="UPF0054"/>
    <property type="match status" value="1"/>
</dbReference>
<comment type="function">
    <text evidence="1">Single strand-specific metallo-endoribonuclease involved in late-stage 70S ribosome quality control and in maturation of the 3' terminus of the 16S rRNA.</text>
</comment>
<comment type="cofactor">
    <cofactor evidence="1">
        <name>Zn(2+)</name>
        <dbReference type="ChEBI" id="CHEBI:29105"/>
    </cofactor>
    <text evidence="1">Binds 1 zinc ion.</text>
</comment>
<comment type="subcellular location">
    <subcellularLocation>
        <location evidence="1">Cytoplasm</location>
    </subcellularLocation>
</comment>
<comment type="similarity">
    <text evidence="1">Belongs to the endoribonuclease YbeY family.</text>
</comment>
<evidence type="ECO:0000255" key="1">
    <source>
        <dbReference type="HAMAP-Rule" id="MF_00009"/>
    </source>
</evidence>
<evidence type="ECO:0007829" key="2">
    <source>
        <dbReference type="PDB" id="7Y7O"/>
    </source>
</evidence>
<sequence>MFTIDFSDHTGLVKDAWYKQIEDLLEFAKKEEHIEDDAELSVTFVDKQEIQEINRTYRDKDKVTDVISFALEEDEPEIDFSGLDIPRVLGDIIICTDVAQEQANNYGHSFERELGFLALHGFLHLLGYDHMTEADEKEMFGRQDTILNAYGLTRD</sequence>
<organism>
    <name type="scientific">Staphylococcus aureus (strain Mu50 / ATCC 700699)</name>
    <dbReference type="NCBI Taxonomy" id="158878"/>
    <lineage>
        <taxon>Bacteria</taxon>
        <taxon>Bacillati</taxon>
        <taxon>Bacillota</taxon>
        <taxon>Bacilli</taxon>
        <taxon>Bacillales</taxon>
        <taxon>Staphylococcaceae</taxon>
        <taxon>Staphylococcus</taxon>
    </lineage>
</organism>
<keyword id="KW-0002">3D-structure</keyword>
<keyword id="KW-0963">Cytoplasm</keyword>
<keyword id="KW-0255">Endonuclease</keyword>
<keyword id="KW-0378">Hydrolase</keyword>
<keyword id="KW-0479">Metal-binding</keyword>
<keyword id="KW-0540">Nuclease</keyword>
<keyword id="KW-0690">Ribosome biogenesis</keyword>
<keyword id="KW-0698">rRNA processing</keyword>
<keyword id="KW-0862">Zinc</keyword>
<name>YBEY_STAAM</name>
<gene>
    <name evidence="1" type="primary">ybeY</name>
    <name type="ordered locus">SAV1570</name>
</gene>
<reference key="1">
    <citation type="journal article" date="2001" name="Lancet">
        <title>Whole genome sequencing of meticillin-resistant Staphylococcus aureus.</title>
        <authorList>
            <person name="Kuroda M."/>
            <person name="Ohta T."/>
            <person name="Uchiyama I."/>
            <person name="Baba T."/>
            <person name="Yuzawa H."/>
            <person name="Kobayashi I."/>
            <person name="Cui L."/>
            <person name="Oguchi A."/>
            <person name="Aoki K."/>
            <person name="Nagai Y."/>
            <person name="Lian J.-Q."/>
            <person name="Ito T."/>
            <person name="Kanamori M."/>
            <person name="Matsumaru H."/>
            <person name="Maruyama A."/>
            <person name="Murakami H."/>
            <person name="Hosoyama A."/>
            <person name="Mizutani-Ui Y."/>
            <person name="Takahashi N.K."/>
            <person name="Sawano T."/>
            <person name="Inoue R."/>
            <person name="Kaito C."/>
            <person name="Sekimizu K."/>
            <person name="Hirakawa H."/>
            <person name="Kuhara S."/>
            <person name="Goto S."/>
            <person name="Yabuzaki J."/>
            <person name="Kanehisa M."/>
            <person name="Yamashita A."/>
            <person name="Oshima K."/>
            <person name="Furuya K."/>
            <person name="Yoshino C."/>
            <person name="Shiba T."/>
            <person name="Hattori M."/>
            <person name="Ogasawara N."/>
            <person name="Hayashi H."/>
            <person name="Hiramatsu K."/>
        </authorList>
    </citation>
    <scope>NUCLEOTIDE SEQUENCE [LARGE SCALE GENOMIC DNA]</scope>
    <source>
        <strain>Mu50 / ATCC 700699</strain>
    </source>
</reference>
<proteinExistence type="evidence at protein level"/>
<accession>P67136</accession>
<accession>Q99TS6</accession>
<feature type="chain" id="PRO_0000102528" description="Endoribonuclease YbeY">
    <location>
        <begin position="1"/>
        <end position="155"/>
    </location>
</feature>
<feature type="binding site" evidence="1">
    <location>
        <position position="120"/>
    </location>
    <ligand>
        <name>Zn(2+)</name>
        <dbReference type="ChEBI" id="CHEBI:29105"/>
        <note>catalytic</note>
    </ligand>
</feature>
<feature type="binding site" evidence="1">
    <location>
        <position position="124"/>
    </location>
    <ligand>
        <name>Zn(2+)</name>
        <dbReference type="ChEBI" id="CHEBI:29105"/>
        <note>catalytic</note>
    </ligand>
</feature>
<feature type="binding site" evidence="1">
    <location>
        <position position="130"/>
    </location>
    <ligand>
        <name>Zn(2+)</name>
        <dbReference type="ChEBI" id="CHEBI:29105"/>
        <note>catalytic</note>
    </ligand>
</feature>
<feature type="strand" evidence="2">
    <location>
        <begin position="2"/>
        <end position="11"/>
    </location>
</feature>
<feature type="helix" evidence="2">
    <location>
        <begin position="15"/>
        <end position="31"/>
    </location>
</feature>
<feature type="strand" evidence="2">
    <location>
        <begin position="38"/>
        <end position="45"/>
    </location>
</feature>
<feature type="helix" evidence="2">
    <location>
        <begin position="47"/>
        <end position="58"/>
    </location>
</feature>
<feature type="strand" evidence="2">
    <location>
        <begin position="65"/>
        <end position="70"/>
    </location>
</feature>
<feature type="strand" evidence="2">
    <location>
        <begin position="87"/>
        <end position="95"/>
    </location>
</feature>
<feature type="helix" evidence="2">
    <location>
        <begin position="96"/>
        <end position="106"/>
    </location>
</feature>
<feature type="helix" evidence="2">
    <location>
        <begin position="110"/>
        <end position="125"/>
    </location>
</feature>
<feature type="helix" evidence="2">
    <location>
        <begin position="133"/>
        <end position="149"/>
    </location>
</feature>